<dbReference type="EMBL" id="AE002098">
    <property type="protein sequence ID" value="AAF41677.1"/>
    <property type="molecule type" value="Genomic_DNA"/>
</dbReference>
<dbReference type="PIR" id="H81099">
    <property type="entry name" value="H81099"/>
</dbReference>
<dbReference type="RefSeq" id="NP_274321.1">
    <property type="nucleotide sequence ID" value="NC_003112.2"/>
</dbReference>
<dbReference type="RefSeq" id="WP_002213349.1">
    <property type="nucleotide sequence ID" value="NC_003112.2"/>
</dbReference>
<dbReference type="SMR" id="P0A0U2"/>
<dbReference type="FunCoup" id="P0A0U2">
    <property type="interactions" value="255"/>
</dbReference>
<dbReference type="STRING" id="122586.NMB1302"/>
<dbReference type="PaxDb" id="122586-NMB1302"/>
<dbReference type="KEGG" id="nme:NMB1302"/>
<dbReference type="PATRIC" id="fig|122586.8.peg.1634"/>
<dbReference type="HOGENOM" id="CLU_105066_2_0_4"/>
<dbReference type="InParanoid" id="P0A0U2"/>
<dbReference type="OrthoDB" id="9804203at2"/>
<dbReference type="Proteomes" id="UP000000425">
    <property type="component" value="Chromosome"/>
</dbReference>
<dbReference type="GO" id="GO:0005694">
    <property type="term" value="C:chromosome"/>
    <property type="evidence" value="ECO:0007669"/>
    <property type="project" value="InterPro"/>
</dbReference>
<dbReference type="GO" id="GO:0005829">
    <property type="term" value="C:cytosol"/>
    <property type="evidence" value="ECO:0000318"/>
    <property type="project" value="GO_Central"/>
</dbReference>
<dbReference type="GO" id="GO:0003677">
    <property type="term" value="F:DNA binding"/>
    <property type="evidence" value="ECO:0000318"/>
    <property type="project" value="GO_Central"/>
</dbReference>
<dbReference type="GO" id="GO:0030527">
    <property type="term" value="F:structural constituent of chromatin"/>
    <property type="evidence" value="ECO:0007669"/>
    <property type="project" value="InterPro"/>
</dbReference>
<dbReference type="GO" id="GO:0006310">
    <property type="term" value="P:DNA recombination"/>
    <property type="evidence" value="ECO:0007669"/>
    <property type="project" value="UniProtKB-UniRule"/>
</dbReference>
<dbReference type="GO" id="GO:0006355">
    <property type="term" value="P:regulation of DNA-templated transcription"/>
    <property type="evidence" value="ECO:0007669"/>
    <property type="project" value="UniProtKB-UniRule"/>
</dbReference>
<dbReference type="GO" id="GO:0006417">
    <property type="term" value="P:regulation of translation"/>
    <property type="evidence" value="ECO:0007669"/>
    <property type="project" value="UniProtKB-UniRule"/>
</dbReference>
<dbReference type="CDD" id="cd13836">
    <property type="entry name" value="IHF_B"/>
    <property type="match status" value="1"/>
</dbReference>
<dbReference type="FunFam" id="4.10.520.10:FF:000003">
    <property type="entry name" value="Integration host factor subunit beta"/>
    <property type="match status" value="1"/>
</dbReference>
<dbReference type="Gene3D" id="4.10.520.10">
    <property type="entry name" value="IHF-like DNA-binding proteins"/>
    <property type="match status" value="1"/>
</dbReference>
<dbReference type="HAMAP" id="MF_00381">
    <property type="entry name" value="IHF_beta"/>
    <property type="match status" value="1"/>
</dbReference>
<dbReference type="InterPro" id="IPR000119">
    <property type="entry name" value="Hist_DNA-bd"/>
</dbReference>
<dbReference type="InterPro" id="IPR020816">
    <property type="entry name" value="Histone-like_DNA-bd_CS"/>
</dbReference>
<dbReference type="InterPro" id="IPR010992">
    <property type="entry name" value="IHF-like_DNA-bd_dom_sf"/>
</dbReference>
<dbReference type="InterPro" id="IPR005685">
    <property type="entry name" value="IHF_beta"/>
</dbReference>
<dbReference type="NCBIfam" id="TIGR00988">
    <property type="entry name" value="hip"/>
    <property type="match status" value="1"/>
</dbReference>
<dbReference type="NCBIfam" id="NF001222">
    <property type="entry name" value="PRK00199.1"/>
    <property type="match status" value="1"/>
</dbReference>
<dbReference type="PANTHER" id="PTHR33175">
    <property type="entry name" value="DNA-BINDING PROTEIN HU"/>
    <property type="match status" value="1"/>
</dbReference>
<dbReference type="PANTHER" id="PTHR33175:SF5">
    <property type="entry name" value="INTEGRATION HOST FACTOR SUBUNIT BETA"/>
    <property type="match status" value="1"/>
</dbReference>
<dbReference type="Pfam" id="PF00216">
    <property type="entry name" value="Bac_DNA_binding"/>
    <property type="match status" value="1"/>
</dbReference>
<dbReference type="PRINTS" id="PR01727">
    <property type="entry name" value="DNABINDINGHU"/>
</dbReference>
<dbReference type="SMART" id="SM00411">
    <property type="entry name" value="BHL"/>
    <property type="match status" value="1"/>
</dbReference>
<dbReference type="SUPFAM" id="SSF47729">
    <property type="entry name" value="IHF-like DNA-binding proteins"/>
    <property type="match status" value="1"/>
</dbReference>
<dbReference type="PROSITE" id="PS00045">
    <property type="entry name" value="HISTONE_LIKE"/>
    <property type="match status" value="1"/>
</dbReference>
<evidence type="ECO:0000250" key="1"/>
<evidence type="ECO:0000305" key="2"/>
<gene>
    <name type="primary">ihfB</name>
    <name type="synonym">himD</name>
    <name type="synonym">hip</name>
    <name type="ordered locus">NMB1302</name>
</gene>
<reference key="1">
    <citation type="journal article" date="2000" name="Science">
        <title>Complete genome sequence of Neisseria meningitidis serogroup B strain MC58.</title>
        <authorList>
            <person name="Tettelin H."/>
            <person name="Saunders N.J."/>
            <person name="Heidelberg J.F."/>
            <person name="Jeffries A.C."/>
            <person name="Nelson K.E."/>
            <person name="Eisen J.A."/>
            <person name="Ketchum K.A."/>
            <person name="Hood D.W."/>
            <person name="Peden J.F."/>
            <person name="Dodson R.J."/>
            <person name="Nelson W.C."/>
            <person name="Gwinn M.L."/>
            <person name="DeBoy R.T."/>
            <person name="Peterson J.D."/>
            <person name="Hickey E.K."/>
            <person name="Haft D.H."/>
            <person name="Salzberg S.L."/>
            <person name="White O."/>
            <person name="Fleischmann R.D."/>
            <person name="Dougherty B.A."/>
            <person name="Mason T.M."/>
            <person name="Ciecko A."/>
            <person name="Parksey D.S."/>
            <person name="Blair E."/>
            <person name="Cittone H."/>
            <person name="Clark E.B."/>
            <person name="Cotton M.D."/>
            <person name="Utterback T.R."/>
            <person name="Khouri H.M."/>
            <person name="Qin H."/>
            <person name="Vamathevan J.J."/>
            <person name="Gill J."/>
            <person name="Scarlato V."/>
            <person name="Masignani V."/>
            <person name="Pizza M."/>
            <person name="Grandi G."/>
            <person name="Sun L."/>
            <person name="Smith H.O."/>
            <person name="Fraser C.M."/>
            <person name="Moxon E.R."/>
            <person name="Rappuoli R."/>
            <person name="Venter J.C."/>
        </authorList>
    </citation>
    <scope>NUCLEOTIDE SEQUENCE [LARGE SCALE GENOMIC DNA]</scope>
    <source>
        <strain>ATCC BAA-335 / MC58</strain>
    </source>
</reference>
<sequence>MTKSELMVRLAEVFAAKNGTHLLAKDVEYSVKVLVDTMTRSLARGQRIEIRGFGSFDLNHRPARIGRNPKTGERVEVPEKHVPHFKPGKELRERVDLALKENAN</sequence>
<feature type="chain" id="PRO_0000105056" description="Integration host factor subunit beta">
    <location>
        <begin position="1"/>
        <end position="104"/>
    </location>
</feature>
<organism>
    <name type="scientific">Neisseria meningitidis serogroup B (strain ATCC BAA-335 / MC58)</name>
    <dbReference type="NCBI Taxonomy" id="122586"/>
    <lineage>
        <taxon>Bacteria</taxon>
        <taxon>Pseudomonadati</taxon>
        <taxon>Pseudomonadota</taxon>
        <taxon>Betaproteobacteria</taxon>
        <taxon>Neisseriales</taxon>
        <taxon>Neisseriaceae</taxon>
        <taxon>Neisseria</taxon>
    </lineage>
</organism>
<comment type="function">
    <text evidence="1">This protein is one of the two subunits of integration host factor, a specific DNA-binding protein that functions in genetic recombination as well as in transcriptional and translational control.</text>
</comment>
<comment type="subunit">
    <text evidence="1">Heterodimer of an alpha and a beta chain.</text>
</comment>
<comment type="similarity">
    <text evidence="2">Belongs to the bacterial histone-like protein family.</text>
</comment>
<name>IHFB_NEIMB</name>
<keyword id="KW-0233">DNA recombination</keyword>
<keyword id="KW-0238">DNA-binding</keyword>
<keyword id="KW-1185">Reference proteome</keyword>
<keyword id="KW-0804">Transcription</keyword>
<keyword id="KW-0805">Transcription regulation</keyword>
<keyword id="KW-0810">Translation regulation</keyword>
<accession>P0A0U2</accession>
<accession>Q9JRH3</accession>
<protein>
    <recommendedName>
        <fullName>Integration host factor subunit beta</fullName>
        <shortName>IHF-beta</shortName>
    </recommendedName>
</protein>
<proteinExistence type="inferred from homology"/>